<feature type="initiator methionine" description="Removed" evidence="1">
    <location>
        <position position="1"/>
    </location>
</feature>
<feature type="chain" id="PRO_0000011082" description="Acylase ACY 1 large subunit" evidence="1">
    <location>
        <begin position="2"/>
        <end position="367" status="uncertain"/>
    </location>
</feature>
<feature type="chain" id="PRO_0000011083" description="Acylase ACY 1 small subunit" evidence="1">
    <location>
        <begin position="368"/>
        <end position="558"/>
    </location>
</feature>
<feature type="active site" description="Nucleophile" evidence="1">
    <location>
        <position position="368"/>
    </location>
</feature>
<name>PAC1_PSESV</name>
<proteinExistence type="evidence at protein level"/>
<keyword id="KW-0012">Acyltransferase</keyword>
<keyword id="KW-0046">Antibiotic resistance</keyword>
<keyword id="KW-0903">Direct protein sequencing</keyword>
<keyword id="KW-0378">Hydrolase</keyword>
<keyword id="KW-0808">Transferase</keyword>
<keyword id="KW-0865">Zymogen</keyword>
<dbReference type="EC" id="3.5.1.93"/>
<dbReference type="EC" id="2.3.2.2"/>
<dbReference type="EC" id="3.4.19.13"/>
<dbReference type="EMBL" id="X69020">
    <property type="protein sequence ID" value="CAA48785.1"/>
    <property type="molecule type" value="Genomic_DNA"/>
</dbReference>
<dbReference type="PIR" id="S27199">
    <property type="entry name" value="S27199"/>
</dbReference>
<dbReference type="SMR" id="Q05053"/>
<dbReference type="MEROPS" id="T03.001"/>
<dbReference type="GO" id="GO:0033968">
    <property type="term" value="F:glutaryl-7-aminocephalosporanic-acid acylase activity"/>
    <property type="evidence" value="ECO:0007669"/>
    <property type="project" value="UniProtKB-EC"/>
</dbReference>
<dbReference type="GO" id="GO:0036374">
    <property type="term" value="F:glutathione hydrolase activity"/>
    <property type="evidence" value="ECO:0007669"/>
    <property type="project" value="UniProtKB-EC"/>
</dbReference>
<dbReference type="GO" id="GO:0103068">
    <property type="term" value="F:leukotriene C4 gamma-glutamyl transferase activity"/>
    <property type="evidence" value="ECO:0007669"/>
    <property type="project" value="UniProtKB-EC"/>
</dbReference>
<dbReference type="GO" id="GO:0006751">
    <property type="term" value="P:glutathione catabolic process"/>
    <property type="evidence" value="ECO:0007669"/>
    <property type="project" value="InterPro"/>
</dbReference>
<dbReference type="GO" id="GO:0046677">
    <property type="term" value="P:response to antibiotic"/>
    <property type="evidence" value="ECO:0007669"/>
    <property type="project" value="UniProtKB-KW"/>
</dbReference>
<dbReference type="Gene3D" id="1.10.246.130">
    <property type="match status" value="1"/>
</dbReference>
<dbReference type="Gene3D" id="3.60.20.40">
    <property type="match status" value="1"/>
</dbReference>
<dbReference type="InterPro" id="IPR051792">
    <property type="entry name" value="GGT_bact"/>
</dbReference>
<dbReference type="InterPro" id="IPR055262">
    <property type="entry name" value="GGT_CS"/>
</dbReference>
<dbReference type="InterPro" id="IPR043138">
    <property type="entry name" value="GGT_lsub_C"/>
</dbReference>
<dbReference type="InterPro" id="IPR000101">
    <property type="entry name" value="GGT_peptidase"/>
</dbReference>
<dbReference type="InterPro" id="IPR043137">
    <property type="entry name" value="GGT_ssub"/>
</dbReference>
<dbReference type="InterPro" id="IPR029055">
    <property type="entry name" value="Ntn_hydrolases_N"/>
</dbReference>
<dbReference type="NCBIfam" id="TIGR00066">
    <property type="entry name" value="g_glut_trans"/>
    <property type="match status" value="1"/>
</dbReference>
<dbReference type="PANTHER" id="PTHR43199">
    <property type="entry name" value="GLUTATHIONE HYDROLASE"/>
    <property type="match status" value="1"/>
</dbReference>
<dbReference type="PANTHER" id="PTHR43199:SF1">
    <property type="entry name" value="GLUTATHIONE HYDROLASE PROENZYME"/>
    <property type="match status" value="1"/>
</dbReference>
<dbReference type="Pfam" id="PF01019">
    <property type="entry name" value="G_glu_transpept"/>
    <property type="match status" value="1"/>
</dbReference>
<dbReference type="PRINTS" id="PR01210">
    <property type="entry name" value="GGTRANSPTASE"/>
</dbReference>
<dbReference type="SUPFAM" id="SSF56235">
    <property type="entry name" value="N-terminal nucleophile aminohydrolases (Ntn hydrolases)"/>
    <property type="match status" value="1"/>
</dbReference>
<dbReference type="PROSITE" id="PS00462">
    <property type="entry name" value="G_GLU_TRANSPEPTIDASE"/>
    <property type="match status" value="1"/>
</dbReference>
<reference key="1">
    <citation type="journal article" date="1992" name="Biochim. Biophys. Acta">
        <title>Nucleotide sequence and expression in Escherichia coli of the cephalosporin acylase gene of a Pseudomonas strain.</title>
        <authorList>
            <person name="Ishiye M."/>
            <person name="Niwa M."/>
        </authorList>
    </citation>
    <scope>NUCLEOTIDE SEQUENCE [GENOMIC DNA]</scope>
    <scope>PROTEIN SEQUENCE OF 2-13 AND 368-381</scope>
</reference>
<accession>Q05053</accession>
<sequence length="558" mass="58040">MNAPVPVPRVADFTCEKKPATGSRGMVVTNHPLASAAGAQILLAGGNAIDAAVASLFALTVAEPMMVGILGGGLSHIRLADGRHVVIDNLSTAPGKATADMYECLSDEIGKQRDTRDRENVVGAKAVAVPGALKGWCEALARFGTLPLAEVLQPAIGLAERGFVVTPYLSNCITDNAADLARDPGLAAMLLPGGQPLQPGMRLIQSDYAASLKLIAAEGPEALYGGKLGRALTDYMAANGGLIDQADLSNYRIELREPIRGSYRGYEIIGPPPPSSSGVHIAQMLNILEGYDIGALGFGSTDAVHLLAEALKIAFADRAVATADPAFVKVPVARLIDKAYADERRALIAMEQAKSWTAGLSGGESADTTHVTVADAMGNVVSATQTINGLFGACVQTPGTGMIANNYMYNFDPHPGRALSIAPGKRVFTSMAPMMAVKEGRLAFALGLPGALRIFPSALQAIVNLIDHRMSLQEAVEAPRVWTEGGVLELEEAIPESVAQALIARGHKVVRSPRVAGGMNAIAFNPDGTLTGAACWRADGTPVAISGGLARAGARFTI</sequence>
<evidence type="ECO:0000250" key="1"/>
<evidence type="ECO:0000305" key="2"/>
<comment type="function">
    <text>Besides the cephalosporin acylase I activity which converts GL-7ACA into 7-ACA; this enzyme displays some gamma glutamyltranspeptidase activity.</text>
</comment>
<comment type="catalytic activity">
    <reaction>
        <text>(7R)-7-(4-carboxybutanamido)cephalosporanate + H2O = (7R)-7-aminocephalosporanate + glutarate</text>
        <dbReference type="Rhea" id="RHEA:23508"/>
        <dbReference type="ChEBI" id="CHEBI:15377"/>
        <dbReference type="ChEBI" id="CHEBI:30921"/>
        <dbReference type="ChEBI" id="CHEBI:58501"/>
        <dbReference type="ChEBI" id="CHEBI:58693"/>
        <dbReference type="EC" id="3.5.1.93"/>
    </reaction>
</comment>
<comment type="catalytic activity">
    <reaction>
        <text>an N-terminal (5-L-glutamyl)-[peptide] + an alpha-amino acid = 5-L-glutamyl amino acid + an N-terminal L-alpha-aminoacyl-[peptide]</text>
        <dbReference type="Rhea" id="RHEA:23904"/>
        <dbReference type="Rhea" id="RHEA-COMP:9780"/>
        <dbReference type="Rhea" id="RHEA-COMP:9795"/>
        <dbReference type="ChEBI" id="CHEBI:77644"/>
        <dbReference type="ChEBI" id="CHEBI:78597"/>
        <dbReference type="ChEBI" id="CHEBI:78599"/>
        <dbReference type="ChEBI" id="CHEBI:78608"/>
        <dbReference type="EC" id="2.3.2.2"/>
    </reaction>
</comment>
<comment type="catalytic activity">
    <reaction>
        <text>glutathione + H2O = L-cysteinylglycine + L-glutamate</text>
        <dbReference type="Rhea" id="RHEA:28807"/>
        <dbReference type="ChEBI" id="CHEBI:15377"/>
        <dbReference type="ChEBI" id="CHEBI:29985"/>
        <dbReference type="ChEBI" id="CHEBI:57925"/>
        <dbReference type="ChEBI" id="CHEBI:61694"/>
        <dbReference type="EC" id="3.4.19.13"/>
    </reaction>
</comment>
<comment type="catalytic activity">
    <reaction>
        <text>an S-substituted glutathione + H2O = an S-substituted L-cysteinylglycine + L-glutamate</text>
        <dbReference type="Rhea" id="RHEA:59468"/>
        <dbReference type="ChEBI" id="CHEBI:15377"/>
        <dbReference type="ChEBI" id="CHEBI:29985"/>
        <dbReference type="ChEBI" id="CHEBI:90779"/>
        <dbReference type="ChEBI" id="CHEBI:143103"/>
        <dbReference type="EC" id="3.4.19.13"/>
    </reaction>
</comment>
<comment type="subunit">
    <text>Dimer of two non-identical chains processed from the same precursor.</text>
</comment>
<comment type="similarity">
    <text evidence="2">Belongs to the gamma-glutamyltransferase family.</text>
</comment>
<gene>
    <name type="primary">acyI</name>
</gene>
<protein>
    <recommendedName>
        <fullName>Acylase ACY 1 proenzyme</fullName>
    </recommendedName>
    <domain>
        <recommendedName>
            <fullName>Cephalosporin acylase</fullName>
            <ecNumber>3.5.1.93</ecNumber>
        </recommendedName>
        <alternativeName>
            <fullName>GL-7ACA acylase</fullName>
        </alternativeName>
    </domain>
    <domain>
        <recommendedName>
            <fullName>Gamma-glutamyltranspeptidase</fullName>
            <shortName>GGT</shortName>
            <ecNumber>2.3.2.2</ecNumber>
        </recommendedName>
        <alternativeName>
            <fullName>Glutathione hydrolase</fullName>
            <ecNumber>3.4.19.13</ecNumber>
        </alternativeName>
    </domain>
    <component>
        <recommendedName>
            <fullName>Acylase ACY 1 large subunit</fullName>
        </recommendedName>
    </component>
    <component>
        <recommendedName>
            <fullName>Acylase ACY 1 small subunit</fullName>
        </recommendedName>
    </component>
</protein>
<organism>
    <name type="scientific">Pseudomonas sp. (strain V22)</name>
    <dbReference type="NCBI Taxonomy" id="33068"/>
    <lineage>
        <taxon>Bacteria</taxon>
        <taxon>Pseudomonadati</taxon>
        <taxon>Pseudomonadota</taxon>
    </lineage>
</organism>